<dbReference type="EMBL" id="CR382122">
    <property type="status" value="NOT_ANNOTATED_CDS"/>
    <property type="molecule type" value="Genomic_DNA"/>
</dbReference>
<dbReference type="SMR" id="Q6CW22"/>
<dbReference type="FunCoup" id="Q6CW22">
    <property type="interactions" value="355"/>
</dbReference>
<dbReference type="STRING" id="284590.Q6CW22"/>
<dbReference type="PaxDb" id="284590-Q6CW22"/>
<dbReference type="InParanoid" id="Q6CW22"/>
<dbReference type="OMA" id="RRTKMNI"/>
<dbReference type="Proteomes" id="UP000000598">
    <property type="component" value="Chromosome B"/>
</dbReference>
<dbReference type="GO" id="GO:0022625">
    <property type="term" value="C:cytosolic large ribosomal subunit"/>
    <property type="evidence" value="ECO:0007669"/>
    <property type="project" value="TreeGrafter"/>
</dbReference>
<dbReference type="GO" id="GO:0003735">
    <property type="term" value="F:structural constituent of ribosome"/>
    <property type="evidence" value="ECO:0007669"/>
    <property type="project" value="InterPro"/>
</dbReference>
<dbReference type="GO" id="GO:0006412">
    <property type="term" value="P:translation"/>
    <property type="evidence" value="ECO:0007669"/>
    <property type="project" value="InterPro"/>
</dbReference>
<dbReference type="FunFam" id="1.10.1620.10:FF:000001">
    <property type="entry name" value="60S ribosomal protein-like L39"/>
    <property type="match status" value="1"/>
</dbReference>
<dbReference type="Gene3D" id="1.10.1620.10">
    <property type="entry name" value="Ribosomal protein L39e"/>
    <property type="match status" value="1"/>
</dbReference>
<dbReference type="HAMAP" id="MF_00629">
    <property type="entry name" value="Ribosomal_eL39"/>
    <property type="match status" value="1"/>
</dbReference>
<dbReference type="InterPro" id="IPR000077">
    <property type="entry name" value="Ribosomal_eL39"/>
</dbReference>
<dbReference type="InterPro" id="IPR020083">
    <property type="entry name" value="Ribosomal_eL39_CS"/>
</dbReference>
<dbReference type="InterPro" id="IPR023626">
    <property type="entry name" value="Ribosomal_eL39_dom_sf"/>
</dbReference>
<dbReference type="PANTHER" id="PTHR19970:SF0">
    <property type="entry name" value="LARGE RIBOSOMAL SUBUNIT PROTEIN EL39"/>
    <property type="match status" value="1"/>
</dbReference>
<dbReference type="PANTHER" id="PTHR19970">
    <property type="entry name" value="RIBOSOMAL PROTEIN L39E"/>
    <property type="match status" value="1"/>
</dbReference>
<dbReference type="Pfam" id="PF00832">
    <property type="entry name" value="Ribosomal_L39"/>
    <property type="match status" value="1"/>
</dbReference>
<dbReference type="SUPFAM" id="SSF48662">
    <property type="entry name" value="Ribosomal protein L39e"/>
    <property type="match status" value="1"/>
</dbReference>
<dbReference type="PROSITE" id="PS00051">
    <property type="entry name" value="RIBOSOMAL_L39E"/>
    <property type="match status" value="1"/>
</dbReference>
<reference key="1">
    <citation type="journal article" date="2004" name="Nature">
        <title>Genome evolution in yeasts.</title>
        <authorList>
            <person name="Dujon B."/>
            <person name="Sherman D."/>
            <person name="Fischer G."/>
            <person name="Durrens P."/>
            <person name="Casaregola S."/>
            <person name="Lafontaine I."/>
            <person name="de Montigny J."/>
            <person name="Marck C."/>
            <person name="Neuveglise C."/>
            <person name="Talla E."/>
            <person name="Goffard N."/>
            <person name="Frangeul L."/>
            <person name="Aigle M."/>
            <person name="Anthouard V."/>
            <person name="Babour A."/>
            <person name="Barbe V."/>
            <person name="Barnay S."/>
            <person name="Blanchin S."/>
            <person name="Beckerich J.-M."/>
            <person name="Beyne E."/>
            <person name="Bleykasten C."/>
            <person name="Boisrame A."/>
            <person name="Boyer J."/>
            <person name="Cattolico L."/>
            <person name="Confanioleri F."/>
            <person name="de Daruvar A."/>
            <person name="Despons L."/>
            <person name="Fabre E."/>
            <person name="Fairhead C."/>
            <person name="Ferry-Dumazet H."/>
            <person name="Groppi A."/>
            <person name="Hantraye F."/>
            <person name="Hennequin C."/>
            <person name="Jauniaux N."/>
            <person name="Joyet P."/>
            <person name="Kachouri R."/>
            <person name="Kerrest A."/>
            <person name="Koszul R."/>
            <person name="Lemaire M."/>
            <person name="Lesur I."/>
            <person name="Ma L."/>
            <person name="Muller H."/>
            <person name="Nicaud J.-M."/>
            <person name="Nikolski M."/>
            <person name="Oztas S."/>
            <person name="Ozier-Kalogeropoulos O."/>
            <person name="Pellenz S."/>
            <person name="Potier S."/>
            <person name="Richard G.-F."/>
            <person name="Straub M.-L."/>
            <person name="Suleau A."/>
            <person name="Swennen D."/>
            <person name="Tekaia F."/>
            <person name="Wesolowski-Louvel M."/>
            <person name="Westhof E."/>
            <person name="Wirth B."/>
            <person name="Zeniou-Meyer M."/>
            <person name="Zivanovic Y."/>
            <person name="Bolotin-Fukuhara M."/>
            <person name="Thierry A."/>
            <person name="Bouchier C."/>
            <person name="Caudron B."/>
            <person name="Scarpelli C."/>
            <person name="Gaillardin C."/>
            <person name="Weissenbach J."/>
            <person name="Wincker P."/>
            <person name="Souciet J.-L."/>
        </authorList>
    </citation>
    <scope>NUCLEOTIDE SEQUENCE [LARGE SCALE GENOMIC DNA]</scope>
    <source>
        <strain>ATCC 8585 / CBS 2359 / DSM 70799 / NBRC 1267 / NRRL Y-1140 / WM37</strain>
    </source>
</reference>
<organism>
    <name type="scientific">Kluyveromyces lactis (strain ATCC 8585 / CBS 2359 / DSM 70799 / NBRC 1267 / NRRL Y-1140 / WM37)</name>
    <name type="common">Yeast</name>
    <name type="synonym">Candida sphaerica</name>
    <dbReference type="NCBI Taxonomy" id="284590"/>
    <lineage>
        <taxon>Eukaryota</taxon>
        <taxon>Fungi</taxon>
        <taxon>Dikarya</taxon>
        <taxon>Ascomycota</taxon>
        <taxon>Saccharomycotina</taxon>
        <taxon>Saccharomycetes</taxon>
        <taxon>Saccharomycetales</taxon>
        <taxon>Saccharomycetaceae</taxon>
        <taxon>Kluyveromyces</taxon>
    </lineage>
</organism>
<evidence type="ECO:0000250" key="1"/>
<evidence type="ECO:0000250" key="2">
    <source>
        <dbReference type="UniProtKB" id="P04650"/>
    </source>
</evidence>
<evidence type="ECO:0000305" key="3"/>
<accession>Q6CW22</accession>
<proteinExistence type="inferred from homology"/>
<gene>
    <name type="primary">RPL39</name>
    <name type="ordered locus">KLLA0B07592g</name>
</gene>
<feature type="initiator methionine" description="Removed" evidence="1">
    <location>
        <position position="1"/>
    </location>
</feature>
<feature type="chain" id="PRO_0000127041" description="Large ribosomal subunit protein eL39">
    <location>
        <begin position="2"/>
        <end position="51"/>
    </location>
</feature>
<sequence length="51" mass="6264">MAAKKSFIIKQKLAKAKNQNRPLPQWYRLKTNNKIRYNAKRRHWRRTKLGL</sequence>
<keyword id="KW-1185">Reference proteome</keyword>
<keyword id="KW-0687">Ribonucleoprotein</keyword>
<keyword id="KW-0689">Ribosomal protein</keyword>
<protein>
    <recommendedName>
        <fullName evidence="3">Large ribosomal subunit protein eL39</fullName>
    </recommendedName>
    <alternativeName>
        <fullName>60S ribosomal protein L39</fullName>
    </alternativeName>
</protein>
<name>RL39_KLULA</name>
<comment type="subunit">
    <text evidence="2">Interacts with YIH1.</text>
</comment>
<comment type="similarity">
    <text evidence="3">Belongs to the eukaryotic ribosomal protein eL39 family.</text>
</comment>